<sequence>MDISEEKKRRIHELIEELNKYAYEYYVLDNPTVSDKEYDKRYDELVNLEKETGFVLSYSPTQRVGDTVLTQFDKYTHKSRLWSLDKAQNIEQLKEWINRNEKIIMEYNRLNEETLPMPTYILTKKFDGLTVNCTYDESGILVKGATRGTGIIGEDITSQVKTIKCLPLRIANNNLIEVRGEAIMTKEAFDKYNEKAEIPLKNLRNGAAGALRNLDVRETAKRNLSAFFYDIGYSEGNEFKTYMEMIGFLISMGFPVDPYIKECKDIVEIKDEIKYIEDIRNELNYDIDGIVIAINHIKTREVLGYTVKFPRWAIAYKFEAEEATTKLIDVEWNVGRSGRVTPTALLESVELGGATIKRATLNNMDDIIRKKVRLGAEVFIRRSNDVIPEIMGVVESSLENTEEIKAPLKCPYCESKLINEGVHLFCENTLSCKPQLVKSLVHFASREAMNIEGFSEKTAEQFYEELNIKSIGDLYRVKKEDLLTLDKFKEKKADNIMNAIENSKKPKLSSFIYALSIPNVGVKTARDLVKSFKTLDNIKNATIEELTSVKDIGEIVANSVIEFFKQENINESIKELLELGVTPIMDITEIKKDNKFNGKTIVVTGTLEGYTRNEIKEKLEALGAKVSGSVSKKTDFVLAGEEAGSKYNKAMELGIRIITEEEFNEMIN</sequence>
<evidence type="ECO:0000255" key="1">
    <source>
        <dbReference type="HAMAP-Rule" id="MF_01588"/>
    </source>
</evidence>
<feature type="chain" id="PRO_0000313202" description="DNA ligase">
    <location>
        <begin position="1"/>
        <end position="668"/>
    </location>
</feature>
<feature type="domain" description="BRCT" evidence="1">
    <location>
        <begin position="591"/>
        <end position="668"/>
    </location>
</feature>
<feature type="active site" description="N6-AMP-lysine intermediate" evidence="1">
    <location>
        <position position="125"/>
    </location>
</feature>
<feature type="binding site" evidence="1">
    <location>
        <begin position="35"/>
        <end position="39"/>
    </location>
    <ligand>
        <name>NAD(+)</name>
        <dbReference type="ChEBI" id="CHEBI:57540"/>
    </ligand>
</feature>
<feature type="binding site" evidence="1">
    <location>
        <begin position="83"/>
        <end position="84"/>
    </location>
    <ligand>
        <name>NAD(+)</name>
        <dbReference type="ChEBI" id="CHEBI:57540"/>
    </ligand>
</feature>
<feature type="binding site" evidence="1">
    <location>
        <position position="147"/>
    </location>
    <ligand>
        <name>NAD(+)</name>
        <dbReference type="ChEBI" id="CHEBI:57540"/>
    </ligand>
</feature>
<feature type="binding site" evidence="1">
    <location>
        <position position="181"/>
    </location>
    <ligand>
        <name>NAD(+)</name>
        <dbReference type="ChEBI" id="CHEBI:57540"/>
    </ligand>
</feature>
<feature type="binding site" evidence="1">
    <location>
        <position position="317"/>
    </location>
    <ligand>
        <name>NAD(+)</name>
        <dbReference type="ChEBI" id="CHEBI:57540"/>
    </ligand>
</feature>
<feature type="binding site" evidence="1">
    <location>
        <position position="410"/>
    </location>
    <ligand>
        <name>Zn(2+)</name>
        <dbReference type="ChEBI" id="CHEBI:29105"/>
    </ligand>
</feature>
<feature type="binding site" evidence="1">
    <location>
        <position position="413"/>
    </location>
    <ligand>
        <name>Zn(2+)</name>
        <dbReference type="ChEBI" id="CHEBI:29105"/>
    </ligand>
</feature>
<feature type="binding site" evidence="1">
    <location>
        <position position="426"/>
    </location>
    <ligand>
        <name>Zn(2+)</name>
        <dbReference type="ChEBI" id="CHEBI:29105"/>
    </ligand>
</feature>
<feature type="binding site" evidence="1">
    <location>
        <position position="432"/>
    </location>
    <ligand>
        <name>Zn(2+)</name>
        <dbReference type="ChEBI" id="CHEBI:29105"/>
    </ligand>
</feature>
<accession>Q891I0</accession>
<protein>
    <recommendedName>
        <fullName evidence="1">DNA ligase</fullName>
        <ecNumber evidence="1">6.5.1.2</ecNumber>
    </recommendedName>
    <alternativeName>
        <fullName evidence="1">Polydeoxyribonucleotide synthase [NAD(+)]</fullName>
    </alternativeName>
</protein>
<proteinExistence type="inferred from homology"/>
<keyword id="KW-0227">DNA damage</keyword>
<keyword id="KW-0234">DNA repair</keyword>
<keyword id="KW-0235">DNA replication</keyword>
<keyword id="KW-0436">Ligase</keyword>
<keyword id="KW-0460">Magnesium</keyword>
<keyword id="KW-0464">Manganese</keyword>
<keyword id="KW-0479">Metal-binding</keyword>
<keyword id="KW-0520">NAD</keyword>
<keyword id="KW-1185">Reference proteome</keyword>
<keyword id="KW-0862">Zinc</keyword>
<reference key="1">
    <citation type="journal article" date="2003" name="Proc. Natl. Acad. Sci. U.S.A.">
        <title>The genome sequence of Clostridium tetani, the causative agent of tetanus disease.</title>
        <authorList>
            <person name="Brueggemann H."/>
            <person name="Baeumer S."/>
            <person name="Fricke W.F."/>
            <person name="Wiezer A."/>
            <person name="Liesegang H."/>
            <person name="Decker I."/>
            <person name="Herzberg C."/>
            <person name="Martinez-Arias R."/>
            <person name="Merkl R."/>
            <person name="Henne A."/>
            <person name="Gottschalk G."/>
        </authorList>
    </citation>
    <scope>NUCLEOTIDE SEQUENCE [LARGE SCALE GENOMIC DNA]</scope>
    <source>
        <strain>Massachusetts / E88</strain>
    </source>
</reference>
<dbReference type="EC" id="6.5.1.2" evidence="1"/>
<dbReference type="EMBL" id="AE015927">
    <property type="protein sequence ID" value="AAO36865.1"/>
    <property type="molecule type" value="Genomic_DNA"/>
</dbReference>
<dbReference type="RefSeq" id="WP_011100526.1">
    <property type="nucleotide sequence ID" value="NC_004557.1"/>
</dbReference>
<dbReference type="SMR" id="Q891I0"/>
<dbReference type="STRING" id="212717.CTC_02394"/>
<dbReference type="GeneID" id="24254099"/>
<dbReference type="KEGG" id="ctc:CTC_02394"/>
<dbReference type="HOGENOM" id="CLU_007764_2_1_9"/>
<dbReference type="OrthoDB" id="9759736at2"/>
<dbReference type="Proteomes" id="UP000001412">
    <property type="component" value="Chromosome"/>
</dbReference>
<dbReference type="GO" id="GO:0005829">
    <property type="term" value="C:cytosol"/>
    <property type="evidence" value="ECO:0007669"/>
    <property type="project" value="TreeGrafter"/>
</dbReference>
<dbReference type="GO" id="GO:0003677">
    <property type="term" value="F:DNA binding"/>
    <property type="evidence" value="ECO:0007669"/>
    <property type="project" value="InterPro"/>
</dbReference>
<dbReference type="GO" id="GO:0003911">
    <property type="term" value="F:DNA ligase (NAD+) activity"/>
    <property type="evidence" value="ECO:0007669"/>
    <property type="project" value="UniProtKB-UniRule"/>
</dbReference>
<dbReference type="GO" id="GO:0046872">
    <property type="term" value="F:metal ion binding"/>
    <property type="evidence" value="ECO:0007669"/>
    <property type="project" value="UniProtKB-KW"/>
</dbReference>
<dbReference type="GO" id="GO:0006281">
    <property type="term" value="P:DNA repair"/>
    <property type="evidence" value="ECO:0007669"/>
    <property type="project" value="UniProtKB-KW"/>
</dbReference>
<dbReference type="GO" id="GO:0006260">
    <property type="term" value="P:DNA replication"/>
    <property type="evidence" value="ECO:0007669"/>
    <property type="project" value="UniProtKB-KW"/>
</dbReference>
<dbReference type="CDD" id="cd17748">
    <property type="entry name" value="BRCT_DNA_ligase_like"/>
    <property type="match status" value="1"/>
</dbReference>
<dbReference type="CDD" id="cd09897">
    <property type="entry name" value="H3TH_FEN1-XPG-like"/>
    <property type="match status" value="1"/>
</dbReference>
<dbReference type="CDD" id="cd00114">
    <property type="entry name" value="LIGANc"/>
    <property type="match status" value="1"/>
</dbReference>
<dbReference type="FunFam" id="1.10.150.20:FF:000006">
    <property type="entry name" value="DNA ligase"/>
    <property type="match status" value="1"/>
</dbReference>
<dbReference type="FunFam" id="1.10.150.20:FF:000007">
    <property type="entry name" value="DNA ligase"/>
    <property type="match status" value="1"/>
</dbReference>
<dbReference type="FunFam" id="3.40.50.10190:FF:000054">
    <property type="entry name" value="DNA ligase"/>
    <property type="match status" value="1"/>
</dbReference>
<dbReference type="Gene3D" id="1.10.150.20">
    <property type="entry name" value="5' to 3' exonuclease, C-terminal subdomain"/>
    <property type="match status" value="2"/>
</dbReference>
<dbReference type="Gene3D" id="3.40.50.10190">
    <property type="entry name" value="BRCT domain"/>
    <property type="match status" value="1"/>
</dbReference>
<dbReference type="Gene3D" id="3.30.470.30">
    <property type="entry name" value="DNA ligase/mRNA capping enzyme"/>
    <property type="match status" value="1"/>
</dbReference>
<dbReference type="Gene3D" id="1.10.287.610">
    <property type="entry name" value="Helix hairpin bin"/>
    <property type="match status" value="1"/>
</dbReference>
<dbReference type="Gene3D" id="2.40.50.140">
    <property type="entry name" value="Nucleic acid-binding proteins"/>
    <property type="match status" value="1"/>
</dbReference>
<dbReference type="HAMAP" id="MF_01588">
    <property type="entry name" value="DNA_ligase_A"/>
    <property type="match status" value="1"/>
</dbReference>
<dbReference type="InterPro" id="IPR001357">
    <property type="entry name" value="BRCT_dom"/>
</dbReference>
<dbReference type="InterPro" id="IPR036420">
    <property type="entry name" value="BRCT_dom_sf"/>
</dbReference>
<dbReference type="InterPro" id="IPR041663">
    <property type="entry name" value="DisA/LigA_HHH"/>
</dbReference>
<dbReference type="InterPro" id="IPR001679">
    <property type="entry name" value="DNA_ligase"/>
</dbReference>
<dbReference type="InterPro" id="IPR033136">
    <property type="entry name" value="DNA_ligase_CS"/>
</dbReference>
<dbReference type="InterPro" id="IPR013839">
    <property type="entry name" value="DNAligase_adenylation"/>
</dbReference>
<dbReference type="InterPro" id="IPR013840">
    <property type="entry name" value="DNAligase_N"/>
</dbReference>
<dbReference type="InterPro" id="IPR003583">
    <property type="entry name" value="Hlx-hairpin-Hlx_DNA-bd_motif"/>
</dbReference>
<dbReference type="InterPro" id="IPR012340">
    <property type="entry name" value="NA-bd_OB-fold"/>
</dbReference>
<dbReference type="InterPro" id="IPR004150">
    <property type="entry name" value="NAD_DNA_ligase_OB"/>
</dbReference>
<dbReference type="InterPro" id="IPR010994">
    <property type="entry name" value="RuvA_2-like"/>
</dbReference>
<dbReference type="NCBIfam" id="TIGR00575">
    <property type="entry name" value="dnlj"/>
    <property type="match status" value="1"/>
</dbReference>
<dbReference type="NCBIfam" id="NF005932">
    <property type="entry name" value="PRK07956.1"/>
    <property type="match status" value="1"/>
</dbReference>
<dbReference type="PANTHER" id="PTHR23389">
    <property type="entry name" value="CHROMOSOME TRANSMISSION FIDELITY FACTOR 18"/>
    <property type="match status" value="1"/>
</dbReference>
<dbReference type="PANTHER" id="PTHR23389:SF9">
    <property type="entry name" value="DNA LIGASE"/>
    <property type="match status" value="1"/>
</dbReference>
<dbReference type="Pfam" id="PF00533">
    <property type="entry name" value="BRCT"/>
    <property type="match status" value="1"/>
</dbReference>
<dbReference type="Pfam" id="PF01653">
    <property type="entry name" value="DNA_ligase_aden"/>
    <property type="match status" value="1"/>
</dbReference>
<dbReference type="Pfam" id="PF03120">
    <property type="entry name" value="DNA_ligase_OB"/>
    <property type="match status" value="1"/>
</dbReference>
<dbReference type="Pfam" id="PF12826">
    <property type="entry name" value="HHH_2"/>
    <property type="match status" value="1"/>
</dbReference>
<dbReference type="Pfam" id="PF14520">
    <property type="entry name" value="HHH_5"/>
    <property type="match status" value="1"/>
</dbReference>
<dbReference type="PIRSF" id="PIRSF001604">
    <property type="entry name" value="LigA"/>
    <property type="match status" value="1"/>
</dbReference>
<dbReference type="SMART" id="SM00292">
    <property type="entry name" value="BRCT"/>
    <property type="match status" value="1"/>
</dbReference>
<dbReference type="SMART" id="SM00278">
    <property type="entry name" value="HhH1"/>
    <property type="match status" value="4"/>
</dbReference>
<dbReference type="SMART" id="SM00532">
    <property type="entry name" value="LIGANc"/>
    <property type="match status" value="1"/>
</dbReference>
<dbReference type="SUPFAM" id="SSF52113">
    <property type="entry name" value="BRCT domain"/>
    <property type="match status" value="1"/>
</dbReference>
<dbReference type="SUPFAM" id="SSF56091">
    <property type="entry name" value="DNA ligase/mRNA capping enzyme, catalytic domain"/>
    <property type="match status" value="1"/>
</dbReference>
<dbReference type="SUPFAM" id="SSF50249">
    <property type="entry name" value="Nucleic acid-binding proteins"/>
    <property type="match status" value="1"/>
</dbReference>
<dbReference type="SUPFAM" id="SSF47781">
    <property type="entry name" value="RuvA domain 2-like"/>
    <property type="match status" value="1"/>
</dbReference>
<dbReference type="PROSITE" id="PS50172">
    <property type="entry name" value="BRCT"/>
    <property type="match status" value="1"/>
</dbReference>
<dbReference type="PROSITE" id="PS01056">
    <property type="entry name" value="DNA_LIGASE_N2"/>
    <property type="match status" value="1"/>
</dbReference>
<gene>
    <name evidence="1" type="primary">ligA</name>
    <name type="ordered locus">CTC_02394</name>
</gene>
<organism>
    <name type="scientific">Clostridium tetani (strain Massachusetts / E88)</name>
    <dbReference type="NCBI Taxonomy" id="212717"/>
    <lineage>
        <taxon>Bacteria</taxon>
        <taxon>Bacillati</taxon>
        <taxon>Bacillota</taxon>
        <taxon>Clostridia</taxon>
        <taxon>Eubacteriales</taxon>
        <taxon>Clostridiaceae</taxon>
        <taxon>Clostridium</taxon>
    </lineage>
</organism>
<name>DNLJ_CLOTE</name>
<comment type="function">
    <text evidence="1">DNA ligase that catalyzes the formation of phosphodiester linkages between 5'-phosphoryl and 3'-hydroxyl groups in double-stranded DNA using NAD as a coenzyme and as the energy source for the reaction. It is essential for DNA replication and repair of damaged DNA.</text>
</comment>
<comment type="catalytic activity">
    <reaction evidence="1">
        <text>NAD(+) + (deoxyribonucleotide)n-3'-hydroxyl + 5'-phospho-(deoxyribonucleotide)m = (deoxyribonucleotide)n+m + AMP + beta-nicotinamide D-nucleotide.</text>
        <dbReference type="EC" id="6.5.1.2"/>
    </reaction>
</comment>
<comment type="cofactor">
    <cofactor evidence="1">
        <name>Mg(2+)</name>
        <dbReference type="ChEBI" id="CHEBI:18420"/>
    </cofactor>
    <cofactor evidence="1">
        <name>Mn(2+)</name>
        <dbReference type="ChEBI" id="CHEBI:29035"/>
    </cofactor>
</comment>
<comment type="similarity">
    <text evidence="1">Belongs to the NAD-dependent DNA ligase family. LigA subfamily.</text>
</comment>